<proteinExistence type="inferred from homology"/>
<sequence length="326" mass="37448">MVLTDLYGRPVLSLRIQLNTTCNFNCFFCHMEGTEISGEALKPEEIERVVKIAHKFGVNKIKLTGGEPTLRRDLIDIVKRIRKYITGNISMTTNGVMLPILAYELKKAGLDRVNISMHAFDEDTFQAITGVNSRDRIIKAIDAANEAGLTPVKINFVVLRDLNVDQIPDMIELAAEKHAILQLIEYETTREGESSKEYLKYHMPLDSLEKEIADKALSIERNELHNRPRYIIRTQAGEVKVEFVKPQRNPDFCAHCTRLRITSEGEFKTCLMRSDTNVKFKGINDEKTISELFRQAVLRREPYWRPGDEVRQNEVLAKSIIQNKRK</sequence>
<evidence type="ECO:0000255" key="1">
    <source>
        <dbReference type="HAMAP-Rule" id="MF_01225"/>
    </source>
</evidence>
<evidence type="ECO:0000255" key="2">
    <source>
        <dbReference type="PROSITE-ProRule" id="PRU01266"/>
    </source>
</evidence>
<gene>
    <name evidence="1" type="primary">moaA</name>
    <name type="ordered locus">TV1080</name>
    <name type="ORF">TVG1109522</name>
</gene>
<keyword id="KW-0004">4Fe-4S</keyword>
<keyword id="KW-0342">GTP-binding</keyword>
<keyword id="KW-0408">Iron</keyword>
<keyword id="KW-0411">Iron-sulfur</keyword>
<keyword id="KW-0456">Lyase</keyword>
<keyword id="KW-0479">Metal-binding</keyword>
<keyword id="KW-0501">Molybdenum cofactor biosynthesis</keyword>
<keyword id="KW-0547">Nucleotide-binding</keyword>
<keyword id="KW-0949">S-adenosyl-L-methionine</keyword>
<reference key="1">
    <citation type="journal article" date="2000" name="Proc. Natl. Acad. Sci. U.S.A.">
        <title>Archaeal adaptation to higher temperatures revealed by genomic sequence of Thermoplasma volcanium.</title>
        <authorList>
            <person name="Kawashima T."/>
            <person name="Amano N."/>
            <person name="Koike H."/>
            <person name="Makino S."/>
            <person name="Higuchi S."/>
            <person name="Kawashima-Ohya Y."/>
            <person name="Watanabe K."/>
            <person name="Yamazaki M."/>
            <person name="Kanehori K."/>
            <person name="Kawamoto T."/>
            <person name="Nunoshiba T."/>
            <person name="Yamamoto Y."/>
            <person name="Aramaki H."/>
            <person name="Makino K."/>
            <person name="Suzuki M."/>
        </authorList>
    </citation>
    <scope>NUCLEOTIDE SEQUENCE [LARGE SCALE GENOMIC DNA]</scope>
    <source>
        <strain>ATCC 51530 / DSM 4299 / JCM 9571 / NBRC 15438 / GSS1</strain>
    </source>
</reference>
<organism>
    <name type="scientific">Thermoplasma volcanium (strain ATCC 51530 / DSM 4299 / JCM 9571 / NBRC 15438 / GSS1)</name>
    <dbReference type="NCBI Taxonomy" id="273116"/>
    <lineage>
        <taxon>Archaea</taxon>
        <taxon>Methanobacteriati</taxon>
        <taxon>Thermoplasmatota</taxon>
        <taxon>Thermoplasmata</taxon>
        <taxon>Thermoplasmatales</taxon>
        <taxon>Thermoplasmataceae</taxon>
        <taxon>Thermoplasma</taxon>
    </lineage>
</organism>
<feature type="chain" id="PRO_0000153031" description="Probable GTP 3',8-cyclase">
    <location>
        <begin position="1"/>
        <end position="326"/>
    </location>
</feature>
<feature type="domain" description="Radical SAM core" evidence="2">
    <location>
        <begin position="6"/>
        <end position="235"/>
    </location>
</feature>
<feature type="binding site" evidence="1">
    <location>
        <position position="15"/>
    </location>
    <ligand>
        <name>GTP</name>
        <dbReference type="ChEBI" id="CHEBI:37565"/>
    </ligand>
</feature>
<feature type="binding site" evidence="1">
    <location>
        <position position="22"/>
    </location>
    <ligand>
        <name>[4Fe-4S] cluster</name>
        <dbReference type="ChEBI" id="CHEBI:49883"/>
        <label>1</label>
        <note>4Fe-4S-S-AdoMet</note>
    </ligand>
</feature>
<feature type="binding site" evidence="1">
    <location>
        <position position="26"/>
    </location>
    <ligand>
        <name>[4Fe-4S] cluster</name>
        <dbReference type="ChEBI" id="CHEBI:49883"/>
        <label>1</label>
        <note>4Fe-4S-S-AdoMet</note>
    </ligand>
</feature>
<feature type="binding site" evidence="1">
    <location>
        <position position="29"/>
    </location>
    <ligand>
        <name>[4Fe-4S] cluster</name>
        <dbReference type="ChEBI" id="CHEBI:49883"/>
        <label>1</label>
        <note>4Fe-4S-S-AdoMet</note>
    </ligand>
</feature>
<feature type="binding site" evidence="1">
    <location>
        <position position="62"/>
    </location>
    <ligand>
        <name>GTP</name>
        <dbReference type="ChEBI" id="CHEBI:37565"/>
    </ligand>
</feature>
<feature type="binding site" evidence="1">
    <location>
        <position position="66"/>
    </location>
    <ligand>
        <name>S-adenosyl-L-methionine</name>
        <dbReference type="ChEBI" id="CHEBI:59789"/>
    </ligand>
</feature>
<feature type="binding site" evidence="1">
    <location>
        <position position="92"/>
    </location>
    <ligand>
        <name>GTP</name>
        <dbReference type="ChEBI" id="CHEBI:37565"/>
    </ligand>
</feature>
<feature type="binding site" evidence="1">
    <location>
        <position position="116"/>
    </location>
    <ligand>
        <name>S-adenosyl-L-methionine</name>
        <dbReference type="ChEBI" id="CHEBI:59789"/>
    </ligand>
</feature>
<feature type="binding site" evidence="1">
    <location>
        <position position="153"/>
    </location>
    <ligand>
        <name>GTP</name>
        <dbReference type="ChEBI" id="CHEBI:37565"/>
    </ligand>
</feature>
<feature type="binding site" evidence="1">
    <location>
        <position position="253"/>
    </location>
    <ligand>
        <name>[4Fe-4S] cluster</name>
        <dbReference type="ChEBI" id="CHEBI:49883"/>
        <label>2</label>
        <note>4Fe-4S-substrate</note>
    </ligand>
</feature>
<feature type="binding site" evidence="1">
    <location>
        <position position="256"/>
    </location>
    <ligand>
        <name>[4Fe-4S] cluster</name>
        <dbReference type="ChEBI" id="CHEBI:49883"/>
        <label>2</label>
        <note>4Fe-4S-substrate</note>
    </ligand>
</feature>
<feature type="binding site" evidence="1">
    <location>
        <begin position="258"/>
        <end position="260"/>
    </location>
    <ligand>
        <name>GTP</name>
        <dbReference type="ChEBI" id="CHEBI:37565"/>
    </ligand>
</feature>
<feature type="binding site" evidence="1">
    <location>
        <position position="270"/>
    </location>
    <ligand>
        <name>[4Fe-4S] cluster</name>
        <dbReference type="ChEBI" id="CHEBI:49883"/>
        <label>2</label>
        <note>4Fe-4S-substrate</note>
    </ligand>
</feature>
<comment type="function">
    <text evidence="1">Catalyzes the cyclization of GTP to (8S)-3',8-cyclo-7,8-dihydroguanosine 5'-triphosphate.</text>
</comment>
<comment type="catalytic activity">
    <reaction evidence="1">
        <text>GTP + AH2 + S-adenosyl-L-methionine = (8S)-3',8-cyclo-7,8-dihydroguanosine 5'-triphosphate + 5'-deoxyadenosine + L-methionine + A + H(+)</text>
        <dbReference type="Rhea" id="RHEA:49576"/>
        <dbReference type="ChEBI" id="CHEBI:13193"/>
        <dbReference type="ChEBI" id="CHEBI:15378"/>
        <dbReference type="ChEBI" id="CHEBI:17319"/>
        <dbReference type="ChEBI" id="CHEBI:17499"/>
        <dbReference type="ChEBI" id="CHEBI:37565"/>
        <dbReference type="ChEBI" id="CHEBI:57844"/>
        <dbReference type="ChEBI" id="CHEBI:59789"/>
        <dbReference type="ChEBI" id="CHEBI:131766"/>
        <dbReference type="EC" id="4.1.99.22"/>
    </reaction>
</comment>
<comment type="cofactor">
    <cofactor evidence="1">
        <name>[4Fe-4S] cluster</name>
        <dbReference type="ChEBI" id="CHEBI:49883"/>
    </cofactor>
    <text evidence="1">Binds 2 [4Fe-4S] clusters. Binds 1 [4Fe-4S] cluster coordinated with 3 cysteines and an exchangeable S-adenosyl-L-methionine and 1 [4Fe-4S] cluster coordinated with 3 cysteines and the GTP-derived substrate.</text>
</comment>
<comment type="pathway">
    <text evidence="1">Cofactor biosynthesis; molybdopterin biosynthesis.</text>
</comment>
<comment type="similarity">
    <text evidence="1">Belongs to the radical SAM superfamily. MoaA family.</text>
</comment>
<accession>Q979T0</accession>
<dbReference type="EC" id="4.1.99.22" evidence="1"/>
<dbReference type="EMBL" id="BA000011">
    <property type="protein sequence ID" value="BAB60222.1"/>
    <property type="molecule type" value="Genomic_DNA"/>
</dbReference>
<dbReference type="RefSeq" id="WP_010917310.1">
    <property type="nucleotide sequence ID" value="NC_002689.2"/>
</dbReference>
<dbReference type="SMR" id="Q979T0"/>
<dbReference type="STRING" id="273116.gene:9381876"/>
<dbReference type="PaxDb" id="273116-14325318"/>
<dbReference type="GeneID" id="1441192"/>
<dbReference type="KEGG" id="tvo:TVG1109522"/>
<dbReference type="eggNOG" id="arCOG00930">
    <property type="taxonomic scope" value="Archaea"/>
</dbReference>
<dbReference type="HOGENOM" id="CLU_009273_0_1_2"/>
<dbReference type="OrthoDB" id="6925at2157"/>
<dbReference type="PhylomeDB" id="Q979T0"/>
<dbReference type="UniPathway" id="UPA00344"/>
<dbReference type="Proteomes" id="UP000001017">
    <property type="component" value="Chromosome"/>
</dbReference>
<dbReference type="GO" id="GO:0051539">
    <property type="term" value="F:4 iron, 4 sulfur cluster binding"/>
    <property type="evidence" value="ECO:0007669"/>
    <property type="project" value="UniProtKB-UniRule"/>
</dbReference>
<dbReference type="GO" id="GO:0061799">
    <property type="term" value="F:cyclic pyranopterin monophosphate synthase activity"/>
    <property type="evidence" value="ECO:0007669"/>
    <property type="project" value="TreeGrafter"/>
</dbReference>
<dbReference type="GO" id="GO:0061798">
    <property type="term" value="F:GTP 3',8'-cyclase activity"/>
    <property type="evidence" value="ECO:0007669"/>
    <property type="project" value="UniProtKB-UniRule"/>
</dbReference>
<dbReference type="GO" id="GO:0005525">
    <property type="term" value="F:GTP binding"/>
    <property type="evidence" value="ECO:0007669"/>
    <property type="project" value="UniProtKB-UniRule"/>
</dbReference>
<dbReference type="GO" id="GO:0046872">
    <property type="term" value="F:metal ion binding"/>
    <property type="evidence" value="ECO:0007669"/>
    <property type="project" value="UniProtKB-KW"/>
</dbReference>
<dbReference type="GO" id="GO:1904047">
    <property type="term" value="F:S-adenosyl-L-methionine binding"/>
    <property type="evidence" value="ECO:0007669"/>
    <property type="project" value="UniProtKB-UniRule"/>
</dbReference>
<dbReference type="GO" id="GO:0006777">
    <property type="term" value="P:Mo-molybdopterin cofactor biosynthetic process"/>
    <property type="evidence" value="ECO:0007669"/>
    <property type="project" value="UniProtKB-UniRule"/>
</dbReference>
<dbReference type="CDD" id="cd01335">
    <property type="entry name" value="Radical_SAM"/>
    <property type="match status" value="1"/>
</dbReference>
<dbReference type="CDD" id="cd21117">
    <property type="entry name" value="Twitch_MoaA"/>
    <property type="match status" value="1"/>
</dbReference>
<dbReference type="Gene3D" id="3.20.20.70">
    <property type="entry name" value="Aldolase class I"/>
    <property type="match status" value="1"/>
</dbReference>
<dbReference type="HAMAP" id="MF_01225_A">
    <property type="entry name" value="MoaA_A"/>
    <property type="match status" value="1"/>
</dbReference>
<dbReference type="InterPro" id="IPR013785">
    <property type="entry name" value="Aldolase_TIM"/>
</dbReference>
<dbReference type="InterPro" id="IPR006638">
    <property type="entry name" value="Elp3/MiaA/NifB-like_rSAM"/>
</dbReference>
<dbReference type="InterPro" id="IPR013485">
    <property type="entry name" value="MoaA_arc"/>
</dbReference>
<dbReference type="InterPro" id="IPR000385">
    <property type="entry name" value="MoaA_NifB_PqqE_Fe-S-bd_CS"/>
</dbReference>
<dbReference type="InterPro" id="IPR010505">
    <property type="entry name" value="MoaA_twitch"/>
</dbReference>
<dbReference type="InterPro" id="IPR050105">
    <property type="entry name" value="MoCo_biosynth_MoaA/MoaC"/>
</dbReference>
<dbReference type="InterPro" id="IPR007197">
    <property type="entry name" value="rSAM"/>
</dbReference>
<dbReference type="NCBIfam" id="TIGR02668">
    <property type="entry name" value="moaA_archaeal"/>
    <property type="match status" value="1"/>
</dbReference>
<dbReference type="NCBIfam" id="NF001199">
    <property type="entry name" value="PRK00164.2-1"/>
    <property type="match status" value="1"/>
</dbReference>
<dbReference type="PANTHER" id="PTHR22960:SF0">
    <property type="entry name" value="MOLYBDENUM COFACTOR BIOSYNTHESIS PROTEIN 1"/>
    <property type="match status" value="1"/>
</dbReference>
<dbReference type="PANTHER" id="PTHR22960">
    <property type="entry name" value="MOLYBDOPTERIN COFACTOR SYNTHESIS PROTEIN A"/>
    <property type="match status" value="1"/>
</dbReference>
<dbReference type="Pfam" id="PF13353">
    <property type="entry name" value="Fer4_12"/>
    <property type="match status" value="1"/>
</dbReference>
<dbReference type="Pfam" id="PF06463">
    <property type="entry name" value="Mob_synth_C"/>
    <property type="match status" value="1"/>
</dbReference>
<dbReference type="Pfam" id="PF04055">
    <property type="entry name" value="Radical_SAM"/>
    <property type="match status" value="1"/>
</dbReference>
<dbReference type="SFLD" id="SFLDG01383">
    <property type="entry name" value="cyclic_pyranopterin_phosphate"/>
    <property type="match status" value="1"/>
</dbReference>
<dbReference type="SFLD" id="SFLDS00029">
    <property type="entry name" value="Radical_SAM"/>
    <property type="match status" value="1"/>
</dbReference>
<dbReference type="SMART" id="SM00729">
    <property type="entry name" value="Elp3"/>
    <property type="match status" value="1"/>
</dbReference>
<dbReference type="SUPFAM" id="SSF102114">
    <property type="entry name" value="Radical SAM enzymes"/>
    <property type="match status" value="1"/>
</dbReference>
<dbReference type="PROSITE" id="PS01305">
    <property type="entry name" value="MOAA_NIFB_PQQE"/>
    <property type="match status" value="1"/>
</dbReference>
<dbReference type="PROSITE" id="PS51918">
    <property type="entry name" value="RADICAL_SAM"/>
    <property type="match status" value="1"/>
</dbReference>
<name>MOAA_THEVO</name>
<protein>
    <recommendedName>
        <fullName evidence="1">Probable GTP 3',8-cyclase</fullName>
        <ecNumber evidence="1">4.1.99.22</ecNumber>
    </recommendedName>
    <alternativeName>
        <fullName evidence="1">Molybdenum cofactor biosynthesis protein A</fullName>
    </alternativeName>
</protein>